<organism>
    <name type="scientific">Schizosaccharomyces pombe (strain 972 / ATCC 24843)</name>
    <name type="common">Fission yeast</name>
    <dbReference type="NCBI Taxonomy" id="284812"/>
    <lineage>
        <taxon>Eukaryota</taxon>
        <taxon>Fungi</taxon>
        <taxon>Dikarya</taxon>
        <taxon>Ascomycota</taxon>
        <taxon>Taphrinomycotina</taxon>
        <taxon>Schizosaccharomycetes</taxon>
        <taxon>Schizosaccharomycetales</taxon>
        <taxon>Schizosaccharomycetaceae</taxon>
        <taxon>Schizosaccharomyces</taxon>
    </lineage>
</organism>
<reference key="1">
    <citation type="journal article" date="2002" name="Nature">
        <title>The genome sequence of Schizosaccharomyces pombe.</title>
        <authorList>
            <person name="Wood V."/>
            <person name="Gwilliam R."/>
            <person name="Rajandream M.A."/>
            <person name="Lyne M.H."/>
            <person name="Lyne R."/>
            <person name="Stewart A."/>
            <person name="Sgouros J.G."/>
            <person name="Peat N."/>
            <person name="Hayles J."/>
            <person name="Baker S.G."/>
            <person name="Basham D."/>
            <person name="Bowman S."/>
            <person name="Brooks K."/>
            <person name="Brown D."/>
            <person name="Brown S."/>
            <person name="Chillingworth T."/>
            <person name="Churcher C.M."/>
            <person name="Collins M."/>
            <person name="Connor R."/>
            <person name="Cronin A."/>
            <person name="Davis P."/>
            <person name="Feltwell T."/>
            <person name="Fraser A."/>
            <person name="Gentles S."/>
            <person name="Goble A."/>
            <person name="Hamlin N."/>
            <person name="Harris D.E."/>
            <person name="Hidalgo J."/>
            <person name="Hodgson G."/>
            <person name="Holroyd S."/>
            <person name="Hornsby T."/>
            <person name="Howarth S."/>
            <person name="Huckle E.J."/>
            <person name="Hunt S."/>
            <person name="Jagels K."/>
            <person name="James K.D."/>
            <person name="Jones L."/>
            <person name="Jones M."/>
            <person name="Leather S."/>
            <person name="McDonald S."/>
            <person name="McLean J."/>
            <person name="Mooney P."/>
            <person name="Moule S."/>
            <person name="Mungall K.L."/>
            <person name="Murphy L.D."/>
            <person name="Niblett D."/>
            <person name="Odell C."/>
            <person name="Oliver K."/>
            <person name="O'Neil S."/>
            <person name="Pearson D."/>
            <person name="Quail M.A."/>
            <person name="Rabbinowitsch E."/>
            <person name="Rutherford K.M."/>
            <person name="Rutter S."/>
            <person name="Saunders D."/>
            <person name="Seeger K."/>
            <person name="Sharp S."/>
            <person name="Skelton J."/>
            <person name="Simmonds M.N."/>
            <person name="Squares R."/>
            <person name="Squares S."/>
            <person name="Stevens K."/>
            <person name="Taylor K."/>
            <person name="Taylor R.G."/>
            <person name="Tivey A."/>
            <person name="Walsh S.V."/>
            <person name="Warren T."/>
            <person name="Whitehead S."/>
            <person name="Woodward J.R."/>
            <person name="Volckaert G."/>
            <person name="Aert R."/>
            <person name="Robben J."/>
            <person name="Grymonprez B."/>
            <person name="Weltjens I."/>
            <person name="Vanstreels E."/>
            <person name="Rieger M."/>
            <person name="Schaefer M."/>
            <person name="Mueller-Auer S."/>
            <person name="Gabel C."/>
            <person name="Fuchs M."/>
            <person name="Duesterhoeft A."/>
            <person name="Fritzc C."/>
            <person name="Holzer E."/>
            <person name="Moestl D."/>
            <person name="Hilbert H."/>
            <person name="Borzym K."/>
            <person name="Langer I."/>
            <person name="Beck A."/>
            <person name="Lehrach H."/>
            <person name="Reinhardt R."/>
            <person name="Pohl T.M."/>
            <person name="Eger P."/>
            <person name="Zimmermann W."/>
            <person name="Wedler H."/>
            <person name="Wambutt R."/>
            <person name="Purnelle B."/>
            <person name="Goffeau A."/>
            <person name="Cadieu E."/>
            <person name="Dreano S."/>
            <person name="Gloux S."/>
            <person name="Lelaure V."/>
            <person name="Mottier S."/>
            <person name="Galibert F."/>
            <person name="Aves S.J."/>
            <person name="Xiang Z."/>
            <person name="Hunt C."/>
            <person name="Moore K."/>
            <person name="Hurst S.M."/>
            <person name="Lucas M."/>
            <person name="Rochet M."/>
            <person name="Gaillardin C."/>
            <person name="Tallada V.A."/>
            <person name="Garzon A."/>
            <person name="Thode G."/>
            <person name="Daga R.R."/>
            <person name="Cruzado L."/>
            <person name="Jimenez J."/>
            <person name="Sanchez M."/>
            <person name="del Rey F."/>
            <person name="Benito J."/>
            <person name="Dominguez A."/>
            <person name="Revuelta J.L."/>
            <person name="Moreno S."/>
            <person name="Armstrong J."/>
            <person name="Forsburg S.L."/>
            <person name="Cerutti L."/>
            <person name="Lowe T."/>
            <person name="McCombie W.R."/>
            <person name="Paulsen I."/>
            <person name="Potashkin J."/>
            <person name="Shpakovski G.V."/>
            <person name="Ussery D."/>
            <person name="Barrell B.G."/>
            <person name="Nurse P."/>
        </authorList>
    </citation>
    <scope>NUCLEOTIDE SEQUENCE [LARGE SCALE GENOMIC DNA]</scope>
    <source>
        <strain>972 / ATCC 24843</strain>
    </source>
</reference>
<reference key="2">
    <citation type="journal article" date="2000" name="Genes Cells">
        <title>Large-scale screening of intracellular protein localization in living fission yeast cells by the use of a GFP-fusion genomic DNA library.</title>
        <authorList>
            <person name="Ding D.-Q."/>
            <person name="Tomita Y."/>
            <person name="Yamamoto A."/>
            <person name="Chikashige Y."/>
            <person name="Haraguchi T."/>
            <person name="Hiraoka Y."/>
        </authorList>
    </citation>
    <scope>NUCLEOTIDE SEQUENCE [LARGE SCALE GENOMIC DNA] OF 114-179</scope>
    <scope>SUBCELLULAR LOCATION</scope>
    <source>
        <strain>ATCC 38364 / 968</strain>
    </source>
</reference>
<reference key="3">
    <citation type="journal article" date="2006" name="Nat. Biotechnol.">
        <title>ORFeome cloning and global analysis of protein localization in the fission yeast Schizosaccharomyces pombe.</title>
        <authorList>
            <person name="Matsuyama A."/>
            <person name="Arai R."/>
            <person name="Yashiroda Y."/>
            <person name="Shirai A."/>
            <person name="Kamata A."/>
            <person name="Sekido S."/>
            <person name="Kobayashi Y."/>
            <person name="Hashimoto A."/>
            <person name="Hamamoto M."/>
            <person name="Hiraoka Y."/>
            <person name="Horinouchi S."/>
            <person name="Yoshida M."/>
        </authorList>
    </citation>
    <scope>SUBCELLULAR LOCATION [LARGE SCALE ANALYSIS]</scope>
</reference>
<reference key="4">
    <citation type="journal article" date="2008" name="J. Proteome Res.">
        <title>Phosphoproteome analysis of fission yeast.</title>
        <authorList>
            <person name="Wilson-Grady J.T."/>
            <person name="Villen J."/>
            <person name="Gygi S.P."/>
        </authorList>
    </citation>
    <scope>PHOSPHORYLATION [LARGE SCALE ANALYSIS] AT SER-187</scope>
    <scope>IDENTIFICATION BY MASS SPECTROMETRY</scope>
</reference>
<feature type="chain" id="PRO_0000303917" description="Putative histone deacetylase complex subunit cti6">
    <location>
        <begin position="1"/>
        <end position="424"/>
    </location>
</feature>
<feature type="zinc finger region" description="PHD-type">
    <location>
        <begin position="48"/>
        <end position="103"/>
    </location>
</feature>
<feature type="region of interest" description="Disordered" evidence="1">
    <location>
        <begin position="1"/>
        <end position="49"/>
    </location>
</feature>
<feature type="region of interest" description="Disordered" evidence="1">
    <location>
        <begin position="117"/>
        <end position="155"/>
    </location>
</feature>
<feature type="region of interest" description="Disordered" evidence="1">
    <location>
        <begin position="170"/>
        <end position="341"/>
    </location>
</feature>
<feature type="region of interest" description="Disordered" evidence="1">
    <location>
        <begin position="381"/>
        <end position="405"/>
    </location>
</feature>
<feature type="compositionally biased region" description="Low complexity" evidence="1">
    <location>
        <begin position="127"/>
        <end position="137"/>
    </location>
</feature>
<feature type="compositionally biased region" description="Acidic residues" evidence="1">
    <location>
        <begin position="241"/>
        <end position="256"/>
    </location>
</feature>
<feature type="compositionally biased region" description="Basic and acidic residues" evidence="1">
    <location>
        <begin position="257"/>
        <end position="266"/>
    </location>
</feature>
<feature type="compositionally biased region" description="Low complexity" evidence="1">
    <location>
        <begin position="272"/>
        <end position="287"/>
    </location>
</feature>
<feature type="compositionally biased region" description="Basic and acidic residues" evidence="1">
    <location>
        <begin position="294"/>
        <end position="303"/>
    </location>
</feature>
<feature type="compositionally biased region" description="Basic residues" evidence="1">
    <location>
        <begin position="313"/>
        <end position="324"/>
    </location>
</feature>
<feature type="compositionally biased region" description="Basic and acidic residues" evidence="1">
    <location>
        <begin position="392"/>
        <end position="405"/>
    </location>
</feature>
<feature type="modified residue" description="Phosphoserine" evidence="2">
    <location>
        <position position="187"/>
    </location>
</feature>
<accession>Q1MTR4</accession>
<accession>O74328</accession>
<accession>Q9USG2</accession>
<dbReference type="EMBL" id="CU329671">
    <property type="protein sequence ID" value="CAA20056.1"/>
    <property type="molecule type" value="Genomic_DNA"/>
</dbReference>
<dbReference type="EMBL" id="AB027769">
    <property type="protein sequence ID" value="BAA87073.1"/>
    <property type="molecule type" value="Genomic_DNA"/>
</dbReference>
<dbReference type="PIR" id="T39524">
    <property type="entry name" value="T39524"/>
</dbReference>
<dbReference type="RefSeq" id="NP_595212.1">
    <property type="nucleotide sequence ID" value="NM_001021119.2"/>
</dbReference>
<dbReference type="BioGRID" id="276320">
    <property type="interactions" value="29"/>
</dbReference>
<dbReference type="ComplexPortal" id="CPX-9129">
    <property type="entry name" value="RPD3L histone deacetylase complex"/>
</dbReference>
<dbReference type="FunCoup" id="Q1MTR4">
    <property type="interactions" value="50"/>
</dbReference>
<dbReference type="STRING" id="284812.Q1MTR4"/>
<dbReference type="iPTMnet" id="Q1MTR4"/>
<dbReference type="PaxDb" id="4896-SPBC1685.08.1"/>
<dbReference type="EnsemblFungi" id="SPBC1685.08.1">
    <property type="protein sequence ID" value="SPBC1685.08.1:pep"/>
    <property type="gene ID" value="SPBC1685.08"/>
</dbReference>
<dbReference type="GeneID" id="2539769"/>
<dbReference type="KEGG" id="spo:2539769"/>
<dbReference type="PomBase" id="SPBC1685.08">
    <property type="gene designation" value="cti6"/>
</dbReference>
<dbReference type="VEuPathDB" id="FungiDB:SPBC1685.08"/>
<dbReference type="eggNOG" id="KOG1844">
    <property type="taxonomic scope" value="Eukaryota"/>
</dbReference>
<dbReference type="HOGENOM" id="CLU_020879_1_0_1"/>
<dbReference type="InParanoid" id="Q1MTR4"/>
<dbReference type="OMA" id="RPRYMNP"/>
<dbReference type="PhylomeDB" id="Q1MTR4"/>
<dbReference type="PRO" id="PR:Q1MTR4"/>
<dbReference type="Proteomes" id="UP000002485">
    <property type="component" value="Chromosome II"/>
</dbReference>
<dbReference type="GO" id="GO:0005737">
    <property type="term" value="C:cytoplasm"/>
    <property type="evidence" value="ECO:0007005"/>
    <property type="project" value="PomBase"/>
</dbReference>
<dbReference type="GO" id="GO:0005634">
    <property type="term" value="C:nucleus"/>
    <property type="evidence" value="ECO:0007005"/>
    <property type="project" value="PomBase"/>
</dbReference>
<dbReference type="GO" id="GO:0033698">
    <property type="term" value="C:Rpd3L complex"/>
    <property type="evidence" value="ECO:0000314"/>
    <property type="project" value="PomBase"/>
</dbReference>
<dbReference type="GO" id="GO:0070210">
    <property type="term" value="C:Rpd3L-Expanded complex"/>
    <property type="evidence" value="ECO:0000314"/>
    <property type="project" value="PomBase"/>
</dbReference>
<dbReference type="GO" id="GO:0035064">
    <property type="term" value="F:methylated histone binding"/>
    <property type="evidence" value="ECO:0000318"/>
    <property type="project" value="GO_Central"/>
</dbReference>
<dbReference type="GO" id="GO:0008270">
    <property type="term" value="F:zinc ion binding"/>
    <property type="evidence" value="ECO:0007669"/>
    <property type="project" value="UniProtKB-KW"/>
</dbReference>
<dbReference type="GO" id="GO:0061188">
    <property type="term" value="P:negative regulation of rDNA heterochromatin formation"/>
    <property type="evidence" value="ECO:0000318"/>
    <property type="project" value="GO_Central"/>
</dbReference>
<dbReference type="GO" id="GO:0045815">
    <property type="term" value="P:transcription initiation-coupled chromatin remodeling"/>
    <property type="evidence" value="ECO:0000305"/>
    <property type="project" value="PomBase"/>
</dbReference>
<dbReference type="Gene3D" id="3.30.40.10">
    <property type="entry name" value="Zinc/RING finger domain, C3HC4 (zinc finger)"/>
    <property type="match status" value="1"/>
</dbReference>
<dbReference type="InterPro" id="IPR053051">
    <property type="entry name" value="HDAC_complex_subunit"/>
</dbReference>
<dbReference type="InterPro" id="IPR019786">
    <property type="entry name" value="Zinc_finger_PHD-type_CS"/>
</dbReference>
<dbReference type="InterPro" id="IPR011011">
    <property type="entry name" value="Znf_FYVE_PHD"/>
</dbReference>
<dbReference type="InterPro" id="IPR001965">
    <property type="entry name" value="Znf_PHD"/>
</dbReference>
<dbReference type="InterPro" id="IPR013083">
    <property type="entry name" value="Znf_RING/FYVE/PHD"/>
</dbReference>
<dbReference type="PANTHER" id="PTHR47793">
    <property type="entry name" value="HISTONE DEACETYLASE COMPLEX SUBUNIT CTI6"/>
    <property type="match status" value="1"/>
</dbReference>
<dbReference type="PANTHER" id="PTHR47793:SF1">
    <property type="entry name" value="HISTONE DEACETYLASE COMPLEX SUBUNIT CTI6"/>
    <property type="match status" value="1"/>
</dbReference>
<dbReference type="Pfam" id="PF20826">
    <property type="entry name" value="PHD_5"/>
    <property type="match status" value="1"/>
</dbReference>
<dbReference type="SMART" id="SM00249">
    <property type="entry name" value="PHD"/>
    <property type="match status" value="1"/>
</dbReference>
<dbReference type="SUPFAM" id="SSF57903">
    <property type="entry name" value="FYVE/PHD zinc finger"/>
    <property type="match status" value="1"/>
</dbReference>
<dbReference type="PROSITE" id="PS01359">
    <property type="entry name" value="ZF_PHD_1"/>
    <property type="match status" value="1"/>
</dbReference>
<protein>
    <recommendedName>
        <fullName>Putative histone deacetylase complex subunit cti6</fullName>
    </recommendedName>
</protein>
<comment type="function">
    <text>Could be a component of the RPD3C(L) histone deacetylase complex (HDAC).</text>
</comment>
<comment type="subcellular location">
    <subcellularLocation>
        <location>Cytoplasm</location>
    </subcellularLocation>
    <subcellularLocation>
        <location>Nucleus</location>
    </subcellularLocation>
</comment>
<gene>
    <name type="primary">cti6</name>
    <name type="ORF">SPBC1685.08</name>
</gene>
<sequence>MPSNSTPANEEKEEESEKIQKSPVDTPHTPNGSVSDNEENETSSTGEVTRCVCGIVESDDEASDGGLYIQCDQCSVWQHGNCVGFADESEVPEVYYCEICHPEFHKVYQRGRGAKQSKYLGNGKPIEASQTEESSSTPPSPATKKSSKQRLTMNSRDAALDYEEYLAIAKEKSLIPRRSRGRTSSKSLSPPAPQDESQGTEINLKQKIEEENDEILEDSKESKDENEENKETSTTNVAETDAPEEETVDTVEEIADEEKHSVKEESGEASPQSSQQSTITSISTTTRSTRKAKREAAAEDKADLPAAVAPKPSKTRKVGGRRGKSSSNDNHRIPQLHPDGTFVETITKPKGLHSRITMTEMRRRVASMLEYIGHIQVEMAAQSAGNQSSTKSSKEGPEEEKETLRMVDNLTRDLLHWEQRFSRT</sequence>
<proteinExistence type="evidence at protein level"/>
<keyword id="KW-0156">Chromatin regulator</keyword>
<keyword id="KW-0963">Cytoplasm</keyword>
<keyword id="KW-0479">Metal-binding</keyword>
<keyword id="KW-0539">Nucleus</keyword>
<keyword id="KW-0597">Phosphoprotein</keyword>
<keyword id="KW-1185">Reference proteome</keyword>
<keyword id="KW-0862">Zinc</keyword>
<keyword id="KW-0863">Zinc-finger</keyword>
<evidence type="ECO:0000256" key="1">
    <source>
        <dbReference type="SAM" id="MobiDB-lite"/>
    </source>
</evidence>
<evidence type="ECO:0000269" key="2">
    <source>
    </source>
</evidence>
<name>CTI6_SCHPO</name>